<dbReference type="EC" id="2.7.7.23" evidence="1"/>
<dbReference type="EC" id="2.3.1.157" evidence="1"/>
<dbReference type="EMBL" id="AE017340">
    <property type="protein sequence ID" value="AAV83449.1"/>
    <property type="molecule type" value="Genomic_DNA"/>
</dbReference>
<dbReference type="RefSeq" id="WP_011235840.1">
    <property type="nucleotide sequence ID" value="NC_006512.1"/>
</dbReference>
<dbReference type="SMR" id="Q5QZH4"/>
<dbReference type="STRING" id="283942.IL2617"/>
<dbReference type="GeneID" id="41337816"/>
<dbReference type="KEGG" id="ilo:IL2617"/>
<dbReference type="eggNOG" id="COG1207">
    <property type="taxonomic scope" value="Bacteria"/>
</dbReference>
<dbReference type="HOGENOM" id="CLU_029499_15_2_6"/>
<dbReference type="OrthoDB" id="9775031at2"/>
<dbReference type="UniPathway" id="UPA00113">
    <property type="reaction ID" value="UER00532"/>
</dbReference>
<dbReference type="UniPathway" id="UPA00113">
    <property type="reaction ID" value="UER00533"/>
</dbReference>
<dbReference type="UniPathway" id="UPA00973"/>
<dbReference type="Proteomes" id="UP000001171">
    <property type="component" value="Chromosome"/>
</dbReference>
<dbReference type="GO" id="GO:0005737">
    <property type="term" value="C:cytoplasm"/>
    <property type="evidence" value="ECO:0007669"/>
    <property type="project" value="UniProtKB-SubCell"/>
</dbReference>
<dbReference type="GO" id="GO:0016020">
    <property type="term" value="C:membrane"/>
    <property type="evidence" value="ECO:0007669"/>
    <property type="project" value="GOC"/>
</dbReference>
<dbReference type="GO" id="GO:0019134">
    <property type="term" value="F:glucosamine-1-phosphate N-acetyltransferase activity"/>
    <property type="evidence" value="ECO:0007669"/>
    <property type="project" value="UniProtKB-UniRule"/>
</dbReference>
<dbReference type="GO" id="GO:0000287">
    <property type="term" value="F:magnesium ion binding"/>
    <property type="evidence" value="ECO:0007669"/>
    <property type="project" value="UniProtKB-UniRule"/>
</dbReference>
<dbReference type="GO" id="GO:0003977">
    <property type="term" value="F:UDP-N-acetylglucosamine diphosphorylase activity"/>
    <property type="evidence" value="ECO:0007669"/>
    <property type="project" value="UniProtKB-UniRule"/>
</dbReference>
<dbReference type="GO" id="GO:0000902">
    <property type="term" value="P:cell morphogenesis"/>
    <property type="evidence" value="ECO:0007669"/>
    <property type="project" value="UniProtKB-UniRule"/>
</dbReference>
<dbReference type="GO" id="GO:0071555">
    <property type="term" value="P:cell wall organization"/>
    <property type="evidence" value="ECO:0007669"/>
    <property type="project" value="UniProtKB-KW"/>
</dbReference>
<dbReference type="GO" id="GO:0009245">
    <property type="term" value="P:lipid A biosynthetic process"/>
    <property type="evidence" value="ECO:0007669"/>
    <property type="project" value="UniProtKB-UniRule"/>
</dbReference>
<dbReference type="GO" id="GO:0009252">
    <property type="term" value="P:peptidoglycan biosynthetic process"/>
    <property type="evidence" value="ECO:0007669"/>
    <property type="project" value="UniProtKB-UniRule"/>
</dbReference>
<dbReference type="GO" id="GO:0008360">
    <property type="term" value="P:regulation of cell shape"/>
    <property type="evidence" value="ECO:0007669"/>
    <property type="project" value="UniProtKB-KW"/>
</dbReference>
<dbReference type="GO" id="GO:0006048">
    <property type="term" value="P:UDP-N-acetylglucosamine biosynthetic process"/>
    <property type="evidence" value="ECO:0007669"/>
    <property type="project" value="UniProtKB-UniPathway"/>
</dbReference>
<dbReference type="CDD" id="cd02540">
    <property type="entry name" value="GT2_GlmU_N_bac"/>
    <property type="match status" value="1"/>
</dbReference>
<dbReference type="CDD" id="cd03353">
    <property type="entry name" value="LbH_GlmU_C"/>
    <property type="match status" value="1"/>
</dbReference>
<dbReference type="Gene3D" id="2.160.10.10">
    <property type="entry name" value="Hexapeptide repeat proteins"/>
    <property type="match status" value="1"/>
</dbReference>
<dbReference type="Gene3D" id="3.90.550.10">
    <property type="entry name" value="Spore Coat Polysaccharide Biosynthesis Protein SpsA, Chain A"/>
    <property type="match status" value="1"/>
</dbReference>
<dbReference type="HAMAP" id="MF_01631">
    <property type="entry name" value="GlmU"/>
    <property type="match status" value="1"/>
</dbReference>
<dbReference type="InterPro" id="IPR005882">
    <property type="entry name" value="Bifunctional_GlmU"/>
</dbReference>
<dbReference type="InterPro" id="IPR050065">
    <property type="entry name" value="GlmU-like"/>
</dbReference>
<dbReference type="InterPro" id="IPR038009">
    <property type="entry name" value="GlmU_C_LbH"/>
</dbReference>
<dbReference type="InterPro" id="IPR001451">
    <property type="entry name" value="Hexapep"/>
</dbReference>
<dbReference type="InterPro" id="IPR018357">
    <property type="entry name" value="Hexapep_transf_CS"/>
</dbReference>
<dbReference type="InterPro" id="IPR025877">
    <property type="entry name" value="MobA-like_NTP_Trfase"/>
</dbReference>
<dbReference type="InterPro" id="IPR029044">
    <property type="entry name" value="Nucleotide-diphossugar_trans"/>
</dbReference>
<dbReference type="InterPro" id="IPR011004">
    <property type="entry name" value="Trimer_LpxA-like_sf"/>
</dbReference>
<dbReference type="NCBIfam" id="TIGR01173">
    <property type="entry name" value="glmU"/>
    <property type="match status" value="1"/>
</dbReference>
<dbReference type="PANTHER" id="PTHR43584:SF3">
    <property type="entry name" value="BIFUNCTIONAL PROTEIN GLMU"/>
    <property type="match status" value="1"/>
</dbReference>
<dbReference type="PANTHER" id="PTHR43584">
    <property type="entry name" value="NUCLEOTIDYL TRANSFERASE"/>
    <property type="match status" value="1"/>
</dbReference>
<dbReference type="Pfam" id="PF00132">
    <property type="entry name" value="Hexapep"/>
    <property type="match status" value="2"/>
</dbReference>
<dbReference type="Pfam" id="PF12804">
    <property type="entry name" value="NTP_transf_3"/>
    <property type="match status" value="1"/>
</dbReference>
<dbReference type="SUPFAM" id="SSF53448">
    <property type="entry name" value="Nucleotide-diphospho-sugar transferases"/>
    <property type="match status" value="1"/>
</dbReference>
<dbReference type="SUPFAM" id="SSF51161">
    <property type="entry name" value="Trimeric LpxA-like enzymes"/>
    <property type="match status" value="1"/>
</dbReference>
<dbReference type="PROSITE" id="PS00101">
    <property type="entry name" value="HEXAPEP_TRANSFERASES"/>
    <property type="match status" value="1"/>
</dbReference>
<organism>
    <name type="scientific">Idiomarina loihiensis (strain ATCC BAA-735 / DSM 15497 / L2-TR)</name>
    <dbReference type="NCBI Taxonomy" id="283942"/>
    <lineage>
        <taxon>Bacteria</taxon>
        <taxon>Pseudomonadati</taxon>
        <taxon>Pseudomonadota</taxon>
        <taxon>Gammaproteobacteria</taxon>
        <taxon>Alteromonadales</taxon>
        <taxon>Idiomarinaceae</taxon>
        <taxon>Idiomarina</taxon>
    </lineage>
</organism>
<protein>
    <recommendedName>
        <fullName evidence="1">Bifunctional protein GlmU</fullName>
    </recommendedName>
    <domain>
        <recommendedName>
            <fullName evidence="1">UDP-N-acetylglucosamine pyrophosphorylase</fullName>
            <ecNumber evidence="1">2.7.7.23</ecNumber>
        </recommendedName>
        <alternativeName>
            <fullName evidence="1">N-acetylglucosamine-1-phosphate uridyltransferase</fullName>
        </alternativeName>
    </domain>
    <domain>
        <recommendedName>
            <fullName evidence="1">Glucosamine-1-phosphate N-acetyltransferase</fullName>
            <ecNumber evidence="1">2.3.1.157</ecNumber>
        </recommendedName>
    </domain>
</protein>
<reference key="1">
    <citation type="journal article" date="2004" name="Proc. Natl. Acad. Sci. U.S.A.">
        <title>Genome sequence of the deep-sea gamma-proteobacterium Idiomarina loihiensis reveals amino acid fermentation as a source of carbon and energy.</title>
        <authorList>
            <person name="Hou S."/>
            <person name="Saw J.H."/>
            <person name="Lee K.S."/>
            <person name="Freitas T.A."/>
            <person name="Belisle C."/>
            <person name="Kawarabayasi Y."/>
            <person name="Donachie S.P."/>
            <person name="Pikina A."/>
            <person name="Galperin M.Y."/>
            <person name="Koonin E.V."/>
            <person name="Makarova K.S."/>
            <person name="Omelchenko M.V."/>
            <person name="Sorokin A."/>
            <person name="Wolf Y.I."/>
            <person name="Li Q.X."/>
            <person name="Keum Y.S."/>
            <person name="Campbell S."/>
            <person name="Denery J."/>
            <person name="Aizawa S."/>
            <person name="Shibata S."/>
            <person name="Malahoff A."/>
            <person name="Alam M."/>
        </authorList>
    </citation>
    <scope>NUCLEOTIDE SEQUENCE [LARGE SCALE GENOMIC DNA]</scope>
    <source>
        <strain>ATCC BAA-735 / DSM 15497 / L2-TR</strain>
    </source>
</reference>
<gene>
    <name evidence="1" type="primary">glmU</name>
    <name type="ordered locus">IL2617</name>
</gene>
<sequence length="456" mass="48874">MKLRVVILAAGKGTRMRSELPKVLHKVANKPMVEHVIDTARSLKPDAINLIYGHGGDQLKQAIAGDDLTWVEQREQLGTGHAVQQVIPHLKSSEKVIILYGDVPLLTESTLIKLVTASANTSLGLLTMTLAEPTGYGRIVRNERRSVTGIVEQKDANAQQLAINEVNTGIMIADSDKLKSWLEQLSNDNAQKEYYLTDIVAMAAREGINIATAQPDNAQEVEGANNRQQLASLERALQQRQAEELMTQGVTLIDPARFDCRGKLSAGSDVTIDINAVFEGNVVLGDRVVIEPNCVIRNSVIGDDTVIRANSHIEDAKVAKGCKVGPFARLRPGAELADEAQVGNFVEMKKSRLGKGSKASHLTYLGDTQVGEYANIGAGTITCNYDGVNKALTEIGDGAFIGSNSSLVAPVAIGKNATVGAGSVITRAVADEELAVARGKQRNISGWQRPQSKKGT</sequence>
<feature type="chain" id="PRO_0000233784" description="Bifunctional protein GlmU">
    <location>
        <begin position="1"/>
        <end position="456"/>
    </location>
</feature>
<feature type="region of interest" description="Pyrophosphorylase" evidence="1">
    <location>
        <begin position="1"/>
        <end position="227"/>
    </location>
</feature>
<feature type="region of interest" description="Linker" evidence="1">
    <location>
        <begin position="228"/>
        <end position="248"/>
    </location>
</feature>
<feature type="region of interest" description="N-acetyltransferase" evidence="1">
    <location>
        <begin position="249"/>
        <end position="456"/>
    </location>
</feature>
<feature type="active site" description="Proton acceptor" evidence="1">
    <location>
        <position position="361"/>
    </location>
</feature>
<feature type="binding site" evidence="1">
    <location>
        <begin position="8"/>
        <end position="11"/>
    </location>
    <ligand>
        <name>UDP-N-acetyl-alpha-D-glucosamine</name>
        <dbReference type="ChEBI" id="CHEBI:57705"/>
    </ligand>
</feature>
<feature type="binding site" evidence="1">
    <location>
        <position position="22"/>
    </location>
    <ligand>
        <name>UDP-N-acetyl-alpha-D-glucosamine</name>
        <dbReference type="ChEBI" id="CHEBI:57705"/>
    </ligand>
</feature>
<feature type="binding site" evidence="1">
    <location>
        <position position="73"/>
    </location>
    <ligand>
        <name>UDP-N-acetyl-alpha-D-glucosamine</name>
        <dbReference type="ChEBI" id="CHEBI:57705"/>
    </ligand>
</feature>
<feature type="binding site" evidence="1">
    <location>
        <begin position="78"/>
        <end position="79"/>
    </location>
    <ligand>
        <name>UDP-N-acetyl-alpha-D-glucosamine</name>
        <dbReference type="ChEBI" id="CHEBI:57705"/>
    </ligand>
</feature>
<feature type="binding site" evidence="1">
    <location>
        <begin position="100"/>
        <end position="102"/>
    </location>
    <ligand>
        <name>UDP-N-acetyl-alpha-D-glucosamine</name>
        <dbReference type="ChEBI" id="CHEBI:57705"/>
    </ligand>
</feature>
<feature type="binding site" evidence="1">
    <location>
        <position position="102"/>
    </location>
    <ligand>
        <name>Mg(2+)</name>
        <dbReference type="ChEBI" id="CHEBI:18420"/>
    </ligand>
</feature>
<feature type="binding site" evidence="1">
    <location>
        <position position="137"/>
    </location>
    <ligand>
        <name>UDP-N-acetyl-alpha-D-glucosamine</name>
        <dbReference type="ChEBI" id="CHEBI:57705"/>
    </ligand>
</feature>
<feature type="binding site" evidence="1">
    <location>
        <position position="152"/>
    </location>
    <ligand>
        <name>UDP-N-acetyl-alpha-D-glucosamine</name>
        <dbReference type="ChEBI" id="CHEBI:57705"/>
    </ligand>
</feature>
<feature type="binding site" evidence="1">
    <location>
        <position position="167"/>
    </location>
    <ligand>
        <name>UDP-N-acetyl-alpha-D-glucosamine</name>
        <dbReference type="ChEBI" id="CHEBI:57705"/>
    </ligand>
</feature>
<feature type="binding site" evidence="1">
    <location>
        <position position="225"/>
    </location>
    <ligand>
        <name>Mg(2+)</name>
        <dbReference type="ChEBI" id="CHEBI:18420"/>
    </ligand>
</feature>
<feature type="binding site" evidence="1">
    <location>
        <position position="225"/>
    </location>
    <ligand>
        <name>UDP-N-acetyl-alpha-D-glucosamine</name>
        <dbReference type="ChEBI" id="CHEBI:57705"/>
    </ligand>
</feature>
<feature type="binding site" evidence="1">
    <location>
        <position position="331"/>
    </location>
    <ligand>
        <name>UDP-N-acetyl-alpha-D-glucosamine</name>
        <dbReference type="ChEBI" id="CHEBI:57705"/>
    </ligand>
</feature>
<feature type="binding site" evidence="1">
    <location>
        <position position="349"/>
    </location>
    <ligand>
        <name>UDP-N-acetyl-alpha-D-glucosamine</name>
        <dbReference type="ChEBI" id="CHEBI:57705"/>
    </ligand>
</feature>
<feature type="binding site" evidence="1">
    <location>
        <position position="364"/>
    </location>
    <ligand>
        <name>UDP-N-acetyl-alpha-D-glucosamine</name>
        <dbReference type="ChEBI" id="CHEBI:57705"/>
    </ligand>
</feature>
<feature type="binding site" evidence="1">
    <location>
        <position position="375"/>
    </location>
    <ligand>
        <name>UDP-N-acetyl-alpha-D-glucosamine</name>
        <dbReference type="ChEBI" id="CHEBI:57705"/>
    </ligand>
</feature>
<feature type="binding site" evidence="1">
    <location>
        <position position="378"/>
    </location>
    <ligand>
        <name>acetyl-CoA</name>
        <dbReference type="ChEBI" id="CHEBI:57288"/>
    </ligand>
</feature>
<feature type="binding site" evidence="1">
    <location>
        <begin position="384"/>
        <end position="385"/>
    </location>
    <ligand>
        <name>acetyl-CoA</name>
        <dbReference type="ChEBI" id="CHEBI:57288"/>
    </ligand>
</feature>
<feature type="binding site" evidence="1">
    <location>
        <position position="403"/>
    </location>
    <ligand>
        <name>acetyl-CoA</name>
        <dbReference type="ChEBI" id="CHEBI:57288"/>
    </ligand>
</feature>
<feature type="binding site" evidence="1">
    <location>
        <position position="421"/>
    </location>
    <ligand>
        <name>acetyl-CoA</name>
        <dbReference type="ChEBI" id="CHEBI:57288"/>
    </ligand>
</feature>
<feature type="binding site" evidence="1">
    <location>
        <position position="438"/>
    </location>
    <ligand>
        <name>acetyl-CoA</name>
        <dbReference type="ChEBI" id="CHEBI:57288"/>
    </ligand>
</feature>
<accession>Q5QZH4</accession>
<evidence type="ECO:0000255" key="1">
    <source>
        <dbReference type="HAMAP-Rule" id="MF_01631"/>
    </source>
</evidence>
<comment type="function">
    <text evidence="1">Catalyzes the last two sequential reactions in the de novo biosynthetic pathway for UDP-N-acetylglucosamine (UDP-GlcNAc). The C-terminal domain catalyzes the transfer of acetyl group from acetyl coenzyme A to glucosamine-1-phosphate (GlcN-1-P) to produce N-acetylglucosamine-1-phosphate (GlcNAc-1-P), which is converted into UDP-GlcNAc by the transfer of uridine 5-monophosphate (from uridine 5-triphosphate), a reaction catalyzed by the N-terminal domain.</text>
</comment>
<comment type="catalytic activity">
    <reaction evidence="1">
        <text>alpha-D-glucosamine 1-phosphate + acetyl-CoA = N-acetyl-alpha-D-glucosamine 1-phosphate + CoA + H(+)</text>
        <dbReference type="Rhea" id="RHEA:13725"/>
        <dbReference type="ChEBI" id="CHEBI:15378"/>
        <dbReference type="ChEBI" id="CHEBI:57287"/>
        <dbReference type="ChEBI" id="CHEBI:57288"/>
        <dbReference type="ChEBI" id="CHEBI:57776"/>
        <dbReference type="ChEBI" id="CHEBI:58516"/>
        <dbReference type="EC" id="2.3.1.157"/>
    </reaction>
</comment>
<comment type="catalytic activity">
    <reaction evidence="1">
        <text>N-acetyl-alpha-D-glucosamine 1-phosphate + UTP + H(+) = UDP-N-acetyl-alpha-D-glucosamine + diphosphate</text>
        <dbReference type="Rhea" id="RHEA:13509"/>
        <dbReference type="ChEBI" id="CHEBI:15378"/>
        <dbReference type="ChEBI" id="CHEBI:33019"/>
        <dbReference type="ChEBI" id="CHEBI:46398"/>
        <dbReference type="ChEBI" id="CHEBI:57705"/>
        <dbReference type="ChEBI" id="CHEBI:57776"/>
        <dbReference type="EC" id="2.7.7.23"/>
    </reaction>
</comment>
<comment type="cofactor">
    <cofactor evidence="1">
        <name>Mg(2+)</name>
        <dbReference type="ChEBI" id="CHEBI:18420"/>
    </cofactor>
    <text evidence="1">Binds 1 Mg(2+) ion per subunit.</text>
</comment>
<comment type="pathway">
    <text evidence="1">Nucleotide-sugar biosynthesis; UDP-N-acetyl-alpha-D-glucosamine biosynthesis; N-acetyl-alpha-D-glucosamine 1-phosphate from alpha-D-glucosamine 6-phosphate (route II): step 2/2.</text>
</comment>
<comment type="pathway">
    <text evidence="1">Nucleotide-sugar biosynthesis; UDP-N-acetyl-alpha-D-glucosamine biosynthesis; UDP-N-acetyl-alpha-D-glucosamine from N-acetyl-alpha-D-glucosamine 1-phosphate: step 1/1.</text>
</comment>
<comment type="pathway">
    <text evidence="1">Bacterial outer membrane biogenesis; LPS lipid A biosynthesis.</text>
</comment>
<comment type="subunit">
    <text evidence="1">Homotrimer.</text>
</comment>
<comment type="subcellular location">
    <subcellularLocation>
        <location evidence="1">Cytoplasm</location>
    </subcellularLocation>
</comment>
<comment type="similarity">
    <text evidence="1">In the N-terminal section; belongs to the N-acetylglucosamine-1-phosphate uridyltransferase family.</text>
</comment>
<comment type="similarity">
    <text evidence="1">In the C-terminal section; belongs to the transferase hexapeptide repeat family.</text>
</comment>
<keyword id="KW-0012">Acyltransferase</keyword>
<keyword id="KW-0133">Cell shape</keyword>
<keyword id="KW-0961">Cell wall biogenesis/degradation</keyword>
<keyword id="KW-0963">Cytoplasm</keyword>
<keyword id="KW-0460">Magnesium</keyword>
<keyword id="KW-0479">Metal-binding</keyword>
<keyword id="KW-0511">Multifunctional enzyme</keyword>
<keyword id="KW-0548">Nucleotidyltransferase</keyword>
<keyword id="KW-0573">Peptidoglycan synthesis</keyword>
<keyword id="KW-1185">Reference proteome</keyword>
<keyword id="KW-0677">Repeat</keyword>
<keyword id="KW-0808">Transferase</keyword>
<proteinExistence type="inferred from homology"/>
<name>GLMU_IDILO</name>